<protein>
    <recommendedName>
        <fullName evidence="1">ATP synthase subunit beta</fullName>
        <ecNumber evidence="1">7.1.2.2</ecNumber>
    </recommendedName>
    <alternativeName>
        <fullName evidence="1">ATP synthase F1 sector subunit beta</fullName>
    </alternativeName>
    <alternativeName>
        <fullName evidence="1">F-ATPase subunit beta</fullName>
    </alternativeName>
</protein>
<keyword id="KW-0002">3D-structure</keyword>
<keyword id="KW-0066">ATP synthesis</keyword>
<keyword id="KW-0067">ATP-binding</keyword>
<keyword id="KW-0997">Cell inner membrane</keyword>
<keyword id="KW-1003">Cell membrane</keyword>
<keyword id="KW-0139">CF(1)</keyword>
<keyword id="KW-0903">Direct protein sequencing</keyword>
<keyword id="KW-0375">Hydrogen ion transport</keyword>
<keyword id="KW-0406">Ion transport</keyword>
<keyword id="KW-0472">Membrane</keyword>
<keyword id="KW-0547">Nucleotide-binding</keyword>
<keyword id="KW-1185">Reference proteome</keyword>
<keyword id="KW-1278">Translocase</keyword>
<keyword id="KW-0813">Transport</keyword>
<dbReference type="EC" id="7.1.2.2" evidence="1"/>
<dbReference type="EMBL" id="X01631">
    <property type="protein sequence ID" value="CAA25782.1"/>
    <property type="molecule type" value="Genomic_DNA"/>
</dbReference>
<dbReference type="EMBL" id="V00267">
    <property type="protein sequence ID" value="CAA23527.1"/>
    <property type="molecule type" value="Genomic_DNA"/>
</dbReference>
<dbReference type="EMBL" id="M25464">
    <property type="protein sequence ID" value="AAA83875.1"/>
    <property type="molecule type" value="Genomic_DNA"/>
</dbReference>
<dbReference type="EMBL" id="J01594">
    <property type="protein sequence ID" value="AAA24737.1"/>
    <property type="molecule type" value="Genomic_DNA"/>
</dbReference>
<dbReference type="EMBL" id="V00311">
    <property type="protein sequence ID" value="CAA23594.1"/>
    <property type="molecule type" value="Genomic_DNA"/>
</dbReference>
<dbReference type="EMBL" id="V00312">
    <property type="protein sequence ID" value="CAA23598.1"/>
    <property type="molecule type" value="Genomic_DNA"/>
</dbReference>
<dbReference type="EMBL" id="L10328">
    <property type="protein sequence ID" value="AAA62084.1"/>
    <property type="molecule type" value="Genomic_DNA"/>
</dbReference>
<dbReference type="EMBL" id="U00096">
    <property type="protein sequence ID" value="AAC76755.1"/>
    <property type="molecule type" value="Genomic_DNA"/>
</dbReference>
<dbReference type="EMBL" id="AP009048">
    <property type="protein sequence ID" value="BAE77556.1"/>
    <property type="molecule type" value="Genomic_DNA"/>
</dbReference>
<dbReference type="PIR" id="A93742">
    <property type="entry name" value="PWECB"/>
</dbReference>
<dbReference type="RefSeq" id="NP_418188.1">
    <property type="nucleotide sequence ID" value="NC_000913.3"/>
</dbReference>
<dbReference type="RefSeq" id="WP_000190506.1">
    <property type="nucleotide sequence ID" value="NZ_STEB01000015.1"/>
</dbReference>
<dbReference type="PDB" id="1D8S">
    <property type="method" value="X-ray"/>
    <property type="resolution" value="4.40 A"/>
    <property type="chains" value="D/E/F=1-460"/>
</dbReference>
<dbReference type="PDB" id="3OAA">
    <property type="method" value="X-ray"/>
    <property type="resolution" value="3.26 A"/>
    <property type="chains" value="D/E/F/L/M/N/T/U/V/b/c/d=2-460"/>
</dbReference>
<dbReference type="PDB" id="5T4O">
    <property type="method" value="EM"/>
    <property type="resolution" value="6.90 A"/>
    <property type="chains" value="D/E/F=1-460"/>
</dbReference>
<dbReference type="PDB" id="5T4P">
    <property type="method" value="EM"/>
    <property type="resolution" value="7.77 A"/>
    <property type="chains" value="D/E/F=1-460"/>
</dbReference>
<dbReference type="PDB" id="5T4Q">
    <property type="method" value="EM"/>
    <property type="resolution" value="8.53 A"/>
    <property type="chains" value="D/E/F=1-460"/>
</dbReference>
<dbReference type="PDB" id="6OQR">
    <property type="method" value="EM"/>
    <property type="resolution" value="3.10 A"/>
    <property type="chains" value="D/E/F=1-460"/>
</dbReference>
<dbReference type="PDB" id="6OQS">
    <property type="method" value="EM"/>
    <property type="resolution" value="3.30 A"/>
    <property type="chains" value="D/E/F=1-460"/>
</dbReference>
<dbReference type="PDB" id="6OQT">
    <property type="method" value="EM"/>
    <property type="resolution" value="3.10 A"/>
    <property type="chains" value="D/E/F=1-460"/>
</dbReference>
<dbReference type="PDB" id="6OQU">
    <property type="method" value="EM"/>
    <property type="resolution" value="3.20 A"/>
    <property type="chains" value="D/E/F=1-460"/>
</dbReference>
<dbReference type="PDB" id="6OQV">
    <property type="method" value="EM"/>
    <property type="resolution" value="3.30 A"/>
    <property type="chains" value="D/E/F=1-460"/>
</dbReference>
<dbReference type="PDB" id="6OQW">
    <property type="method" value="EM"/>
    <property type="resolution" value="3.10 A"/>
    <property type="chains" value="D/E/F=1-460"/>
</dbReference>
<dbReference type="PDB" id="6PQV">
    <property type="method" value="EM"/>
    <property type="resolution" value="3.30 A"/>
    <property type="chains" value="D/E/F=1-460"/>
</dbReference>
<dbReference type="PDB" id="6WNQ">
    <property type="method" value="EM"/>
    <property type="resolution" value="3.40 A"/>
    <property type="chains" value="D/E/F=1-460"/>
</dbReference>
<dbReference type="PDB" id="6WNR">
    <property type="method" value="EM"/>
    <property type="resolution" value="3.30 A"/>
    <property type="chains" value="D/E/F=1-460"/>
</dbReference>
<dbReference type="PDB" id="8DBP">
    <property type="method" value="EM"/>
    <property type="resolution" value="3.60 A"/>
    <property type="chains" value="D/E/F=1-460"/>
</dbReference>
<dbReference type="PDB" id="8DBQ">
    <property type="method" value="EM"/>
    <property type="resolution" value="4.00 A"/>
    <property type="chains" value="D/E/F=1-460"/>
</dbReference>
<dbReference type="PDB" id="8DBR">
    <property type="method" value="EM"/>
    <property type="resolution" value="3.20 A"/>
    <property type="chains" value="D/E/F=1-460"/>
</dbReference>
<dbReference type="PDB" id="8DBS">
    <property type="method" value="EM"/>
    <property type="resolution" value="3.50 A"/>
    <property type="chains" value="D/E/F=1-460"/>
</dbReference>
<dbReference type="PDB" id="8DBT">
    <property type="method" value="EM"/>
    <property type="resolution" value="3.10 A"/>
    <property type="chains" value="D/E/F=1-460"/>
</dbReference>
<dbReference type="PDB" id="8DBU">
    <property type="method" value="EM"/>
    <property type="resolution" value="3.40 A"/>
    <property type="chains" value="D/E/F=1-460"/>
</dbReference>
<dbReference type="PDB" id="8DBV">
    <property type="method" value="EM"/>
    <property type="resolution" value="3.70 A"/>
    <property type="chains" value="D/E/F=1-460"/>
</dbReference>
<dbReference type="PDB" id="8DBW">
    <property type="method" value="EM"/>
    <property type="resolution" value="4.10 A"/>
    <property type="chains" value="D/E/F=1-460"/>
</dbReference>
<dbReference type="PDBsum" id="1D8S"/>
<dbReference type="PDBsum" id="3OAA"/>
<dbReference type="PDBsum" id="5T4O"/>
<dbReference type="PDBsum" id="5T4P"/>
<dbReference type="PDBsum" id="5T4Q"/>
<dbReference type="PDBsum" id="6OQR"/>
<dbReference type="PDBsum" id="6OQS"/>
<dbReference type="PDBsum" id="6OQT"/>
<dbReference type="PDBsum" id="6OQU"/>
<dbReference type="PDBsum" id="6OQV"/>
<dbReference type="PDBsum" id="6OQW"/>
<dbReference type="PDBsum" id="6PQV"/>
<dbReference type="PDBsum" id="6WNQ"/>
<dbReference type="PDBsum" id="6WNR"/>
<dbReference type="PDBsum" id="8DBP"/>
<dbReference type="PDBsum" id="8DBQ"/>
<dbReference type="PDBsum" id="8DBR"/>
<dbReference type="PDBsum" id="8DBS"/>
<dbReference type="PDBsum" id="8DBT"/>
<dbReference type="PDBsum" id="8DBU"/>
<dbReference type="PDBsum" id="8DBV"/>
<dbReference type="PDBsum" id="8DBW"/>
<dbReference type="SMR" id="P0ABB4"/>
<dbReference type="BioGRID" id="4261176">
    <property type="interactions" value="19"/>
</dbReference>
<dbReference type="BioGRID" id="852546">
    <property type="interactions" value="3"/>
</dbReference>
<dbReference type="ComplexPortal" id="CPX-4022">
    <property type="entry name" value="ATP synthase complex"/>
</dbReference>
<dbReference type="DIP" id="DIP-31846N"/>
<dbReference type="FunCoup" id="P0ABB4">
    <property type="interactions" value="714"/>
</dbReference>
<dbReference type="IntAct" id="P0ABB4">
    <property type="interactions" value="31"/>
</dbReference>
<dbReference type="MINT" id="P0ABB4"/>
<dbReference type="STRING" id="511145.b3732"/>
<dbReference type="TCDB" id="3.A.2.1.1">
    <property type="family name" value="the h+- or na+-translocating f-type, v-type and a-type atpase (f-atpase) superfamily"/>
</dbReference>
<dbReference type="CarbonylDB" id="P0ABB4"/>
<dbReference type="jPOST" id="P0ABB4"/>
<dbReference type="PaxDb" id="511145-b3732"/>
<dbReference type="EnsemblBacteria" id="AAC76755">
    <property type="protein sequence ID" value="AAC76755"/>
    <property type="gene ID" value="b3732"/>
</dbReference>
<dbReference type="GeneID" id="93778235"/>
<dbReference type="GeneID" id="948244"/>
<dbReference type="KEGG" id="ecj:JW3710"/>
<dbReference type="KEGG" id="eco:b3732"/>
<dbReference type="KEGG" id="ecoc:C3026_20225"/>
<dbReference type="PATRIC" id="fig|1411691.4.peg.2968"/>
<dbReference type="EchoBASE" id="EB0099"/>
<dbReference type="eggNOG" id="COG0055">
    <property type="taxonomic scope" value="Bacteria"/>
</dbReference>
<dbReference type="HOGENOM" id="CLU_022398_0_2_6"/>
<dbReference type="InParanoid" id="P0ABB4"/>
<dbReference type="OMA" id="SMEEGGW"/>
<dbReference type="OrthoDB" id="9801639at2"/>
<dbReference type="PhylomeDB" id="P0ABB4"/>
<dbReference type="BioCyc" id="EcoCyc:ATPD-MONOMER"/>
<dbReference type="BioCyc" id="MetaCyc:ATPD-MONOMER"/>
<dbReference type="BRENDA" id="7.1.2.2">
    <property type="organism ID" value="2026"/>
</dbReference>
<dbReference type="PRO" id="PR:P0ABB4"/>
<dbReference type="Proteomes" id="UP000000625">
    <property type="component" value="Chromosome"/>
</dbReference>
<dbReference type="GO" id="GO:0016020">
    <property type="term" value="C:membrane"/>
    <property type="evidence" value="ECO:0007005"/>
    <property type="project" value="UniProtKB"/>
</dbReference>
<dbReference type="GO" id="GO:0005886">
    <property type="term" value="C:plasma membrane"/>
    <property type="evidence" value="ECO:0000303"/>
    <property type="project" value="ComplexPortal"/>
</dbReference>
<dbReference type="GO" id="GO:0045259">
    <property type="term" value="C:proton-transporting ATP synthase complex"/>
    <property type="evidence" value="ECO:0000353"/>
    <property type="project" value="ComplexPortal"/>
</dbReference>
<dbReference type="GO" id="GO:0005524">
    <property type="term" value="F:ATP binding"/>
    <property type="evidence" value="ECO:0007669"/>
    <property type="project" value="UniProtKB-UniRule"/>
</dbReference>
<dbReference type="GO" id="GO:0016887">
    <property type="term" value="F:ATP hydrolysis activity"/>
    <property type="evidence" value="ECO:0007669"/>
    <property type="project" value="InterPro"/>
</dbReference>
<dbReference type="GO" id="GO:0046933">
    <property type="term" value="F:proton-transporting ATP synthase activity, rotational mechanism"/>
    <property type="evidence" value="ECO:0007669"/>
    <property type="project" value="UniProtKB-UniRule"/>
</dbReference>
<dbReference type="GO" id="GO:0046961">
    <property type="term" value="F:proton-transporting ATPase activity, rotational mechanism"/>
    <property type="evidence" value="ECO:0000315"/>
    <property type="project" value="EcoCyc"/>
</dbReference>
<dbReference type="GO" id="GO:0042777">
    <property type="term" value="P:proton motive force-driven plasma membrane ATP synthesis"/>
    <property type="evidence" value="ECO:0000315"/>
    <property type="project" value="ComplexPortal"/>
</dbReference>
<dbReference type="CDD" id="cd18110">
    <property type="entry name" value="ATP-synt_F1_beta_C"/>
    <property type="match status" value="1"/>
</dbReference>
<dbReference type="CDD" id="cd18115">
    <property type="entry name" value="ATP-synt_F1_beta_N"/>
    <property type="match status" value="1"/>
</dbReference>
<dbReference type="CDD" id="cd01133">
    <property type="entry name" value="F1-ATPase_beta_CD"/>
    <property type="match status" value="1"/>
</dbReference>
<dbReference type="FunFam" id="1.10.1140.10:FF:000001">
    <property type="entry name" value="ATP synthase subunit beta"/>
    <property type="match status" value="1"/>
</dbReference>
<dbReference type="FunFam" id="2.40.10.170:FF:000003">
    <property type="entry name" value="ATP synthase subunit beta"/>
    <property type="match status" value="1"/>
</dbReference>
<dbReference type="FunFam" id="3.40.50.300:FF:000004">
    <property type="entry name" value="ATP synthase subunit beta"/>
    <property type="match status" value="1"/>
</dbReference>
<dbReference type="Gene3D" id="2.40.10.170">
    <property type="match status" value="1"/>
</dbReference>
<dbReference type="Gene3D" id="1.10.1140.10">
    <property type="entry name" value="Bovine Mitochondrial F1-atpase, Atp Synthase Beta Chain, Chain D, domain 3"/>
    <property type="match status" value="1"/>
</dbReference>
<dbReference type="Gene3D" id="3.40.50.300">
    <property type="entry name" value="P-loop containing nucleotide triphosphate hydrolases"/>
    <property type="match status" value="1"/>
</dbReference>
<dbReference type="HAMAP" id="MF_01347">
    <property type="entry name" value="ATP_synth_beta_bact"/>
    <property type="match status" value="1"/>
</dbReference>
<dbReference type="InterPro" id="IPR003593">
    <property type="entry name" value="AAA+_ATPase"/>
</dbReference>
<dbReference type="InterPro" id="IPR055190">
    <property type="entry name" value="ATP-synt_VA_C"/>
</dbReference>
<dbReference type="InterPro" id="IPR005722">
    <property type="entry name" value="ATP_synth_F1_bsu"/>
</dbReference>
<dbReference type="InterPro" id="IPR020003">
    <property type="entry name" value="ATPase_a/bsu_AS"/>
</dbReference>
<dbReference type="InterPro" id="IPR050053">
    <property type="entry name" value="ATPase_alpha/beta_chains"/>
</dbReference>
<dbReference type="InterPro" id="IPR004100">
    <property type="entry name" value="ATPase_F1/V1/A1_a/bsu_N"/>
</dbReference>
<dbReference type="InterPro" id="IPR036121">
    <property type="entry name" value="ATPase_F1/V1/A1_a/bsu_N_sf"/>
</dbReference>
<dbReference type="InterPro" id="IPR000194">
    <property type="entry name" value="ATPase_F1/V1/A1_a/bsu_nucl-bd"/>
</dbReference>
<dbReference type="InterPro" id="IPR024034">
    <property type="entry name" value="ATPase_F1/V1_b/a_C"/>
</dbReference>
<dbReference type="InterPro" id="IPR027417">
    <property type="entry name" value="P-loop_NTPase"/>
</dbReference>
<dbReference type="NCBIfam" id="TIGR01039">
    <property type="entry name" value="atpD"/>
    <property type="match status" value="1"/>
</dbReference>
<dbReference type="PANTHER" id="PTHR15184">
    <property type="entry name" value="ATP SYNTHASE"/>
    <property type="match status" value="1"/>
</dbReference>
<dbReference type="PANTHER" id="PTHR15184:SF71">
    <property type="entry name" value="ATP SYNTHASE SUBUNIT BETA, MITOCHONDRIAL"/>
    <property type="match status" value="1"/>
</dbReference>
<dbReference type="Pfam" id="PF00006">
    <property type="entry name" value="ATP-synt_ab"/>
    <property type="match status" value="1"/>
</dbReference>
<dbReference type="Pfam" id="PF02874">
    <property type="entry name" value="ATP-synt_ab_N"/>
    <property type="match status" value="1"/>
</dbReference>
<dbReference type="Pfam" id="PF22919">
    <property type="entry name" value="ATP-synt_VA_C"/>
    <property type="match status" value="1"/>
</dbReference>
<dbReference type="SMART" id="SM00382">
    <property type="entry name" value="AAA"/>
    <property type="match status" value="1"/>
</dbReference>
<dbReference type="SUPFAM" id="SSF47917">
    <property type="entry name" value="C-terminal domain of alpha and beta subunits of F1 ATP synthase"/>
    <property type="match status" value="1"/>
</dbReference>
<dbReference type="SUPFAM" id="SSF50615">
    <property type="entry name" value="N-terminal domain of alpha and beta subunits of F1 ATP synthase"/>
    <property type="match status" value="1"/>
</dbReference>
<dbReference type="SUPFAM" id="SSF52540">
    <property type="entry name" value="P-loop containing nucleoside triphosphate hydrolases"/>
    <property type="match status" value="1"/>
</dbReference>
<dbReference type="PROSITE" id="PS00152">
    <property type="entry name" value="ATPASE_ALPHA_BETA"/>
    <property type="match status" value="1"/>
</dbReference>
<reference key="1">
    <citation type="journal article" date="1984" name="Biochem. J.">
        <title>DNA sequence around the Escherichia coli unc operon. Completion of the sequence of a 17 kilobase segment containing asnA, oriC, unc, glmS and phoS.</title>
        <authorList>
            <person name="Walker J.E."/>
            <person name="Gay N.J."/>
            <person name="Saraste M."/>
            <person name="Eberle A.N."/>
        </authorList>
    </citation>
    <scope>NUCLEOTIDE SEQUENCE [GENOMIC DNA]</scope>
</reference>
<reference key="2">
    <citation type="journal article" date="1981" name="Nucleic Acids Res.">
        <title>The atp operon: nucleotide sequence of the genes for the gamma, beta, and epsilon subunits of Escherichia coli ATP synthase.</title>
        <authorList>
            <person name="Saraste M."/>
            <person name="Gay N.J."/>
            <person name="Eberle A."/>
            <person name="Runswick M.J."/>
            <person name="Walker J.E."/>
        </authorList>
    </citation>
    <scope>NUCLEOTIDE SEQUENCE [GENOMIC DNA]</scope>
</reference>
<reference key="3">
    <citation type="journal article" date="1982" name="Ann. N. Y. Acad. Sci.">
        <title>Structure and function of H+-ATPase: what we have learned from Escherichia coli H+-ATPase.</title>
        <authorList>
            <person name="Kanazawa H."/>
            <person name="Futai M."/>
        </authorList>
    </citation>
    <scope>NUCLEOTIDE SEQUENCE [GENOMIC DNA]</scope>
</reference>
<reference key="4">
    <citation type="journal article" date="1982" name="Biochem. Biophys. Res. Commun.">
        <title>Nucleotide sequence of the genes for beta and epsilon subunits of proton-translocating ATPase from Escherichia coli.</title>
        <authorList>
            <person name="Kanazawa H."/>
            <person name="Kayano T."/>
            <person name="Kiyasu T."/>
            <person name="Futai M."/>
        </authorList>
    </citation>
    <scope>NUCLEOTIDE SEQUENCE [GENOMIC DNA]</scope>
</reference>
<reference key="5">
    <citation type="journal article" date="1993" name="Genomics">
        <title>DNA sequence and analysis of 136 kilobases of the Escherichia coli genome: organizational symmetry around the origin of replication.</title>
        <authorList>
            <person name="Burland V.D."/>
            <person name="Plunkett G. III"/>
            <person name="Daniels D.L."/>
            <person name="Blattner F.R."/>
        </authorList>
    </citation>
    <scope>NUCLEOTIDE SEQUENCE [LARGE SCALE GENOMIC DNA]</scope>
    <source>
        <strain>K12 / MG1655 / ATCC 47076</strain>
    </source>
</reference>
<reference key="6">
    <citation type="journal article" date="1997" name="Science">
        <title>The complete genome sequence of Escherichia coli K-12.</title>
        <authorList>
            <person name="Blattner F.R."/>
            <person name="Plunkett G. III"/>
            <person name="Bloch C.A."/>
            <person name="Perna N.T."/>
            <person name="Burland V."/>
            <person name="Riley M."/>
            <person name="Collado-Vides J."/>
            <person name="Glasner J.D."/>
            <person name="Rode C.K."/>
            <person name="Mayhew G.F."/>
            <person name="Gregor J."/>
            <person name="Davis N.W."/>
            <person name="Kirkpatrick H.A."/>
            <person name="Goeden M.A."/>
            <person name="Rose D.J."/>
            <person name="Mau B."/>
            <person name="Shao Y."/>
        </authorList>
    </citation>
    <scope>NUCLEOTIDE SEQUENCE [LARGE SCALE GENOMIC DNA]</scope>
    <source>
        <strain>K12 / MG1655 / ATCC 47076</strain>
    </source>
</reference>
<reference key="7">
    <citation type="journal article" date="2006" name="Mol. Syst. Biol.">
        <title>Highly accurate genome sequences of Escherichia coli K-12 strains MG1655 and W3110.</title>
        <authorList>
            <person name="Hayashi K."/>
            <person name="Morooka N."/>
            <person name="Yamamoto Y."/>
            <person name="Fujita K."/>
            <person name="Isono K."/>
            <person name="Choi S."/>
            <person name="Ohtsubo E."/>
            <person name="Baba T."/>
            <person name="Wanner B.L."/>
            <person name="Mori H."/>
            <person name="Horiuchi T."/>
        </authorList>
    </citation>
    <scope>NUCLEOTIDE SEQUENCE [LARGE SCALE GENOMIC DNA]</scope>
    <source>
        <strain>K12 / W3110 / ATCC 27325 / DSM 5911</strain>
    </source>
</reference>
<reference key="8">
    <citation type="journal article" date="1981" name="Biochem. Biophys. Res. Commun.">
        <title>Nucleotide sequence of the genes coding for alpha, beta and gamma subunits of the proton-translocating ATPase of Escherichia coli.</title>
        <authorList>
            <person name="Kanazawa H."/>
            <person name="Kayano T."/>
            <person name="Mabuchi K."/>
            <person name="Futai M."/>
        </authorList>
    </citation>
    <scope>NUCLEOTIDE SEQUENCE [GENOMIC DNA] OF 1-18</scope>
</reference>
<reference key="9">
    <citation type="journal article" date="1987" name="FEBS Lett.">
        <title>Catalytic and noncatalytic nucleotide binding sites of the Escherichia coli F1 ATPase. Amino acid sequences of beta-subunit tryptic peptides labeled with 2-azido-ATP.</title>
        <authorList>
            <person name="Wise J.G."/>
            <person name="Hicke B.J."/>
            <person name="Boyer P.D."/>
        </authorList>
    </citation>
    <scope>PROTEIN SEQUENCE OF 325-359</scope>
</reference>
<reference key="10">
    <citation type="journal article" date="1997" name="Electrophoresis">
        <title>Comparing the predicted and observed properties of proteins encoded in the genome of Escherichia coli K-12.</title>
        <authorList>
            <person name="Link A.J."/>
            <person name="Robison K."/>
            <person name="Church G.M."/>
        </authorList>
    </citation>
    <scope>PROTEIN SEQUENCE OF 2-24</scope>
    <source>
        <strain>K12 / EMG2</strain>
    </source>
</reference>
<reference key="11">
    <citation type="submission" date="1996-02" db="UniProtKB">
        <authorList>
            <person name="Frutiger S."/>
            <person name="Hughes G.J."/>
            <person name="Pasquali C."/>
            <person name="Hochstrasser D.F."/>
        </authorList>
    </citation>
    <scope>PROTEIN SEQUENCE OF 2-12</scope>
    <source>
        <strain>K12 / W3110 / ATCC 27325 / DSM 5911</strain>
    </source>
</reference>
<reference key="12">
    <citation type="journal article" date="1991" name="J. Biol. Chem.">
        <title>Mutations in Ser174 and the glycine-rich sequence (Gly149, Gly150, and Thr156) in the beta subunit of Escherichia coli H(+)-ATPase.</title>
        <authorList>
            <person name="Iwamoto A."/>
            <person name="Omote H."/>
            <person name="Hanada H."/>
            <person name="Tomioka N."/>
            <person name="Itai A."/>
            <person name="Maeda M."/>
            <person name="Futai M."/>
        </authorList>
    </citation>
    <scope>MUTAGENESIS</scope>
</reference>
<reference key="13">
    <citation type="journal article" date="1997" name="Electrophoresis">
        <title>Escherichia coli proteome analysis using the gene-protein database.</title>
        <authorList>
            <person name="VanBogelen R.A."/>
            <person name="Abshire K.Z."/>
            <person name="Moldover B."/>
            <person name="Olson E.R."/>
            <person name="Neidhardt F.C."/>
        </authorList>
    </citation>
    <scope>IDENTIFICATION BY 2D-GEL</scope>
</reference>
<reference key="14">
    <citation type="journal article" date="1999" name="Proc. Natl. Acad. Sci. U.S.A.">
        <title>Structural features of the gamma subunit of the Escherichia coli F(1) ATPase revealed by a 4.4-A resolution map obtained by X-ray crystallography.</title>
        <authorList>
            <person name="Hausrath A.C."/>
            <person name="Grueber G."/>
            <person name="Matthews B.W."/>
            <person name="Capaldi R.A."/>
        </authorList>
    </citation>
    <scope>X-RAY CRYSTALLOGRAPHY (4.4 ANGSTROMS)</scope>
</reference>
<sequence>MATGKIVQVIGAVVDVEFPQDAVPRVYDALEVQNGNERLVLEVQQQLGGGIVRTIAMGSSDGLRRGLDVKDLEHPIEVPVGKATLGRIMNVLGEPVDMKGEIGEEERWAIHRAAPSYEELSNSQELLETGIKVIDLMCPFAKGGKVGLFGGAGVGKTVNMMELIRNIAIEHSGYSVFAGVGERTREGNDFYHEMTDSNVIDKVSLVYGQMNEPPGNRLRVALTGLTMAEKFRDEGRDVLLFVDNIYRYTLAGTEVSALLGRMPSAVGYQPTLAEEMGVLQERITSTKTGSITSVQAVYVPADDLTDPSPATTFAHLDATVVLSRQIASLGIYPAVDPLDSTSRQLDPLVVGQEHYDTARGVQSILQRYQELKDIIAILGMDELSEEDKLVVARARKIQRFLSQPFFVAEVFTGSPGKYVSLKDTIRGFKGIMEGEYDHLPEQAFYMVGSIEEAVEKAKKL</sequence>
<proteinExistence type="evidence at protein level"/>
<organism>
    <name type="scientific">Escherichia coli (strain K12)</name>
    <dbReference type="NCBI Taxonomy" id="83333"/>
    <lineage>
        <taxon>Bacteria</taxon>
        <taxon>Pseudomonadati</taxon>
        <taxon>Pseudomonadota</taxon>
        <taxon>Gammaproteobacteria</taxon>
        <taxon>Enterobacterales</taxon>
        <taxon>Enterobacteriaceae</taxon>
        <taxon>Escherichia</taxon>
    </lineage>
</organism>
<accession>P0ABB4</accession>
<accession>P00824</accession>
<accession>Q2M850</accession>
<evidence type="ECO:0000255" key="1">
    <source>
        <dbReference type="HAMAP-Rule" id="MF_01347"/>
    </source>
</evidence>
<evidence type="ECO:0000269" key="2">
    <source>
    </source>
</evidence>
<evidence type="ECO:0000269" key="3">
    <source>
    </source>
</evidence>
<evidence type="ECO:0000269" key="4">
    <source ref="11"/>
</evidence>
<evidence type="ECO:0007829" key="5">
    <source>
        <dbReference type="PDB" id="6OQR"/>
    </source>
</evidence>
<evidence type="ECO:0007829" key="6">
    <source>
        <dbReference type="PDB" id="6OQS"/>
    </source>
</evidence>
<evidence type="ECO:0007829" key="7">
    <source>
        <dbReference type="PDB" id="6OQT"/>
    </source>
</evidence>
<evidence type="ECO:0007829" key="8">
    <source>
        <dbReference type="PDB" id="6OQW"/>
    </source>
</evidence>
<comment type="function">
    <text>Produces ATP from ADP in the presence of a proton gradient across the membrane. The catalytic sites are hosted primarily by the beta subunits.</text>
</comment>
<comment type="catalytic activity">
    <reaction evidence="1">
        <text>ATP + H2O + 4 H(+)(in) = ADP + phosphate + 5 H(+)(out)</text>
        <dbReference type="Rhea" id="RHEA:57720"/>
        <dbReference type="ChEBI" id="CHEBI:15377"/>
        <dbReference type="ChEBI" id="CHEBI:15378"/>
        <dbReference type="ChEBI" id="CHEBI:30616"/>
        <dbReference type="ChEBI" id="CHEBI:43474"/>
        <dbReference type="ChEBI" id="CHEBI:456216"/>
        <dbReference type="EC" id="7.1.2.2"/>
    </reaction>
</comment>
<comment type="subunit">
    <text>F-type ATPases have 2 components, CF(1) - the catalytic core - and CF(0) - the membrane proton channel. CF(1) has five subunits: alpha(3), beta(3), gamma(1), delta(1), epsilon(1). CF(0) has three main subunits: a(1), b(2) and c(9-12). The alpha and beta chains form an alternating ring which encloses part of the gamma chain. CF(1) is attached to CF(0) by a central stalk formed by the gamma and epsilon chains, while a peripheral stalk is formed by the delta and b chains.</text>
</comment>
<comment type="interaction">
    <interactant intactId="EBI-368783">
        <id>P0ABB4</id>
    </interactant>
    <interactant intactId="EBI-368707">
        <id>P0ABB0</id>
        <label>atpA</label>
    </interactant>
    <organismsDiffer>false</organismsDiffer>
    <experiments>13</experiments>
</comment>
<comment type="subcellular location">
    <subcellularLocation>
        <location>Cell inner membrane</location>
        <topology>Peripheral membrane protein</topology>
    </subcellularLocation>
</comment>
<comment type="similarity">
    <text evidence="1">Belongs to the ATPase alpha/beta chains family.</text>
</comment>
<feature type="initiator methionine" description="Removed" evidence="3 4">
    <location>
        <position position="1"/>
    </location>
</feature>
<feature type="chain" id="PRO_0000144437" description="ATP synthase subunit beta">
    <location>
        <begin position="2"/>
        <end position="460"/>
    </location>
</feature>
<feature type="binding site" evidence="1">
    <location>
        <begin position="150"/>
        <end position="157"/>
    </location>
    <ligand>
        <name>ATP</name>
        <dbReference type="ChEBI" id="CHEBI:30616"/>
    </ligand>
</feature>
<feature type="mutagenesis site" description="Impairs ATPase activity." evidence="2">
    <original>T</original>
    <variation>A</variation>
    <variation>C</variation>
    <location>
        <position position="157"/>
    </location>
</feature>
<feature type="strand" evidence="5">
    <location>
        <begin position="4"/>
        <end position="10"/>
    </location>
</feature>
<feature type="strand" evidence="5">
    <location>
        <begin position="13"/>
        <end position="17"/>
    </location>
</feature>
<feature type="turn" evidence="6">
    <location>
        <begin position="20"/>
        <end position="22"/>
    </location>
</feature>
<feature type="strand" evidence="5">
    <location>
        <begin position="29"/>
        <end position="32"/>
    </location>
</feature>
<feature type="strand" evidence="5">
    <location>
        <begin position="35"/>
        <end position="37"/>
    </location>
</feature>
<feature type="strand" evidence="5">
    <location>
        <begin position="39"/>
        <end position="46"/>
    </location>
</feature>
<feature type="helix" evidence="8">
    <location>
        <begin position="48"/>
        <end position="50"/>
    </location>
</feature>
<feature type="strand" evidence="5">
    <location>
        <begin position="51"/>
        <end position="58"/>
    </location>
</feature>
<feature type="strand" evidence="5">
    <location>
        <begin position="68"/>
        <end position="74"/>
    </location>
</feature>
<feature type="strand" evidence="5">
    <location>
        <begin position="77"/>
        <end position="81"/>
    </location>
</feature>
<feature type="helix" evidence="5">
    <location>
        <begin position="82"/>
        <end position="84"/>
    </location>
</feature>
<feature type="strand" evidence="5">
    <location>
        <begin position="97"/>
        <end position="99"/>
    </location>
</feature>
<feature type="strand" evidence="5">
    <location>
        <begin position="105"/>
        <end position="110"/>
    </location>
</feature>
<feature type="helix" evidence="5">
    <location>
        <begin position="117"/>
        <end position="119"/>
    </location>
</feature>
<feature type="helix" evidence="5">
    <location>
        <begin position="132"/>
        <end position="137"/>
    </location>
</feature>
<feature type="strand" evidence="5">
    <location>
        <begin position="145"/>
        <end position="150"/>
    </location>
</feature>
<feature type="strand" evidence="8">
    <location>
        <begin position="152"/>
        <end position="155"/>
    </location>
</feature>
<feature type="helix" evidence="5">
    <location>
        <begin position="158"/>
        <end position="168"/>
    </location>
</feature>
<feature type="strand" evidence="5">
    <location>
        <begin position="175"/>
        <end position="181"/>
    </location>
</feature>
<feature type="helix" evidence="5">
    <location>
        <begin position="184"/>
        <end position="195"/>
    </location>
</feature>
<feature type="turn" evidence="5">
    <location>
        <begin position="196"/>
        <end position="198"/>
    </location>
</feature>
<feature type="helix" evidence="5">
    <location>
        <begin position="200"/>
        <end position="202"/>
    </location>
</feature>
<feature type="strand" evidence="5">
    <location>
        <begin position="203"/>
        <end position="208"/>
    </location>
</feature>
<feature type="helix" evidence="5">
    <location>
        <begin position="214"/>
        <end position="233"/>
    </location>
</feature>
<feature type="strand" evidence="5">
    <location>
        <begin position="237"/>
        <end position="243"/>
    </location>
</feature>
<feature type="helix" evidence="5">
    <location>
        <begin position="246"/>
        <end position="256"/>
    </location>
</feature>
<feature type="helix" evidence="5">
    <location>
        <begin position="257"/>
        <end position="259"/>
    </location>
</feature>
<feature type="strand" evidence="8">
    <location>
        <begin position="265"/>
        <end position="267"/>
    </location>
</feature>
<feature type="helix" evidence="5">
    <location>
        <begin position="272"/>
        <end position="280"/>
    </location>
</feature>
<feature type="strand" evidence="5">
    <location>
        <begin position="286"/>
        <end position="288"/>
    </location>
</feature>
<feature type="strand" evidence="5">
    <location>
        <begin position="290"/>
        <end position="298"/>
    </location>
</feature>
<feature type="helix" evidence="5">
    <location>
        <begin position="300"/>
        <end position="302"/>
    </location>
</feature>
<feature type="helix" evidence="5">
    <location>
        <begin position="307"/>
        <end position="310"/>
    </location>
</feature>
<feature type="helix" evidence="5">
    <location>
        <begin position="313"/>
        <end position="315"/>
    </location>
</feature>
<feature type="strand" evidence="5">
    <location>
        <begin position="317"/>
        <end position="322"/>
    </location>
</feature>
<feature type="helix" evidence="5">
    <location>
        <begin position="324"/>
        <end position="327"/>
    </location>
</feature>
<feature type="turn" evidence="5">
    <location>
        <begin position="328"/>
        <end position="330"/>
    </location>
</feature>
<feature type="turn" evidence="5">
    <location>
        <begin position="337"/>
        <end position="339"/>
    </location>
</feature>
<feature type="helix" evidence="5">
    <location>
        <begin position="347"/>
        <end position="350"/>
    </location>
</feature>
<feature type="helix" evidence="5">
    <location>
        <begin position="352"/>
        <end position="370"/>
    </location>
</feature>
<feature type="helix" evidence="5">
    <location>
        <begin position="372"/>
        <end position="378"/>
    </location>
</feature>
<feature type="helix" evidence="5">
    <location>
        <begin position="380"/>
        <end position="382"/>
    </location>
</feature>
<feature type="helix" evidence="5">
    <location>
        <begin position="387"/>
        <end position="400"/>
    </location>
</feature>
<feature type="helix" evidence="7">
    <location>
        <begin position="406"/>
        <end position="408"/>
    </location>
</feature>
<feature type="helix" evidence="5">
    <location>
        <begin position="409"/>
        <end position="412"/>
    </location>
</feature>
<feature type="helix" evidence="5">
    <location>
        <begin position="421"/>
        <end position="433"/>
    </location>
</feature>
<feature type="turn" evidence="5">
    <location>
        <begin position="434"/>
        <end position="438"/>
    </location>
</feature>
<feature type="helix" evidence="5">
    <location>
        <begin position="441"/>
        <end position="444"/>
    </location>
</feature>
<feature type="helix" evidence="5">
    <location>
        <begin position="450"/>
        <end position="458"/>
    </location>
</feature>
<gene>
    <name evidence="1" type="primary">atpD</name>
    <name type="synonym">papB</name>
    <name type="synonym">uncD</name>
    <name type="ordered locus">b3732</name>
    <name type="ordered locus">JW3710</name>
</gene>
<name>ATPB_ECOLI</name>